<feature type="chain" id="PRO_1000116227" description="Adenine phosphoribosyltransferase">
    <location>
        <begin position="1"/>
        <end position="175"/>
    </location>
</feature>
<organism>
    <name type="scientific">Caldicellulosiruptor bescii (strain ATCC BAA-1888 / DSM 6725 / KCTC 15123 / Z-1320)</name>
    <name type="common">Anaerocellum thermophilum</name>
    <dbReference type="NCBI Taxonomy" id="521460"/>
    <lineage>
        <taxon>Bacteria</taxon>
        <taxon>Bacillati</taxon>
        <taxon>Bacillota</taxon>
        <taxon>Bacillota incertae sedis</taxon>
        <taxon>Caldicellulosiruptorales</taxon>
        <taxon>Caldicellulosiruptoraceae</taxon>
        <taxon>Caldicellulosiruptor</taxon>
    </lineage>
</organism>
<dbReference type="EC" id="2.4.2.7" evidence="1"/>
<dbReference type="EMBL" id="CP001393">
    <property type="protein sequence ID" value="ACM61039.1"/>
    <property type="molecule type" value="Genomic_DNA"/>
</dbReference>
<dbReference type="RefSeq" id="WP_013429776.1">
    <property type="nucleotide sequence ID" value="NC_012034.1"/>
</dbReference>
<dbReference type="SMR" id="B9ML31"/>
<dbReference type="STRING" id="521460.Athe_1952"/>
<dbReference type="GeneID" id="31773302"/>
<dbReference type="KEGG" id="ate:Athe_1952"/>
<dbReference type="eggNOG" id="COG0503">
    <property type="taxonomic scope" value="Bacteria"/>
</dbReference>
<dbReference type="HOGENOM" id="CLU_063339_3_0_9"/>
<dbReference type="UniPathway" id="UPA00588">
    <property type="reaction ID" value="UER00646"/>
</dbReference>
<dbReference type="Proteomes" id="UP000007723">
    <property type="component" value="Chromosome"/>
</dbReference>
<dbReference type="GO" id="GO:0005737">
    <property type="term" value="C:cytoplasm"/>
    <property type="evidence" value="ECO:0007669"/>
    <property type="project" value="UniProtKB-SubCell"/>
</dbReference>
<dbReference type="GO" id="GO:0002055">
    <property type="term" value="F:adenine binding"/>
    <property type="evidence" value="ECO:0007669"/>
    <property type="project" value="TreeGrafter"/>
</dbReference>
<dbReference type="GO" id="GO:0003999">
    <property type="term" value="F:adenine phosphoribosyltransferase activity"/>
    <property type="evidence" value="ECO:0007669"/>
    <property type="project" value="UniProtKB-UniRule"/>
</dbReference>
<dbReference type="GO" id="GO:0016208">
    <property type="term" value="F:AMP binding"/>
    <property type="evidence" value="ECO:0007669"/>
    <property type="project" value="TreeGrafter"/>
</dbReference>
<dbReference type="GO" id="GO:0006168">
    <property type="term" value="P:adenine salvage"/>
    <property type="evidence" value="ECO:0007669"/>
    <property type="project" value="InterPro"/>
</dbReference>
<dbReference type="GO" id="GO:0044209">
    <property type="term" value="P:AMP salvage"/>
    <property type="evidence" value="ECO:0007669"/>
    <property type="project" value="UniProtKB-UniRule"/>
</dbReference>
<dbReference type="GO" id="GO:0006166">
    <property type="term" value="P:purine ribonucleoside salvage"/>
    <property type="evidence" value="ECO:0007669"/>
    <property type="project" value="UniProtKB-KW"/>
</dbReference>
<dbReference type="CDD" id="cd06223">
    <property type="entry name" value="PRTases_typeI"/>
    <property type="match status" value="1"/>
</dbReference>
<dbReference type="FunFam" id="3.40.50.2020:FF:000004">
    <property type="entry name" value="Adenine phosphoribosyltransferase"/>
    <property type="match status" value="1"/>
</dbReference>
<dbReference type="Gene3D" id="3.40.50.2020">
    <property type="match status" value="1"/>
</dbReference>
<dbReference type="HAMAP" id="MF_00004">
    <property type="entry name" value="Aden_phosphoribosyltr"/>
    <property type="match status" value="1"/>
</dbReference>
<dbReference type="InterPro" id="IPR005764">
    <property type="entry name" value="Ade_phspho_trans"/>
</dbReference>
<dbReference type="InterPro" id="IPR000836">
    <property type="entry name" value="PRibTrfase_dom"/>
</dbReference>
<dbReference type="InterPro" id="IPR029057">
    <property type="entry name" value="PRTase-like"/>
</dbReference>
<dbReference type="InterPro" id="IPR050054">
    <property type="entry name" value="UPRTase/APRTase"/>
</dbReference>
<dbReference type="NCBIfam" id="TIGR01090">
    <property type="entry name" value="apt"/>
    <property type="match status" value="1"/>
</dbReference>
<dbReference type="NCBIfam" id="NF002633">
    <property type="entry name" value="PRK02304.1-2"/>
    <property type="match status" value="1"/>
</dbReference>
<dbReference type="NCBIfam" id="NF002634">
    <property type="entry name" value="PRK02304.1-3"/>
    <property type="match status" value="1"/>
</dbReference>
<dbReference type="NCBIfam" id="NF002636">
    <property type="entry name" value="PRK02304.1-5"/>
    <property type="match status" value="1"/>
</dbReference>
<dbReference type="PANTHER" id="PTHR32315">
    <property type="entry name" value="ADENINE PHOSPHORIBOSYLTRANSFERASE"/>
    <property type="match status" value="1"/>
</dbReference>
<dbReference type="PANTHER" id="PTHR32315:SF3">
    <property type="entry name" value="ADENINE PHOSPHORIBOSYLTRANSFERASE"/>
    <property type="match status" value="1"/>
</dbReference>
<dbReference type="Pfam" id="PF00156">
    <property type="entry name" value="Pribosyltran"/>
    <property type="match status" value="1"/>
</dbReference>
<dbReference type="SUPFAM" id="SSF53271">
    <property type="entry name" value="PRTase-like"/>
    <property type="match status" value="1"/>
</dbReference>
<dbReference type="PROSITE" id="PS00103">
    <property type="entry name" value="PUR_PYR_PR_TRANSFER"/>
    <property type="match status" value="1"/>
</dbReference>
<comment type="function">
    <text evidence="1">Catalyzes a salvage reaction resulting in the formation of AMP, that is energically less costly than de novo synthesis.</text>
</comment>
<comment type="catalytic activity">
    <reaction evidence="1">
        <text>AMP + diphosphate = 5-phospho-alpha-D-ribose 1-diphosphate + adenine</text>
        <dbReference type="Rhea" id="RHEA:16609"/>
        <dbReference type="ChEBI" id="CHEBI:16708"/>
        <dbReference type="ChEBI" id="CHEBI:33019"/>
        <dbReference type="ChEBI" id="CHEBI:58017"/>
        <dbReference type="ChEBI" id="CHEBI:456215"/>
        <dbReference type="EC" id="2.4.2.7"/>
    </reaction>
</comment>
<comment type="pathway">
    <text evidence="1">Purine metabolism; AMP biosynthesis via salvage pathway; AMP from adenine: step 1/1.</text>
</comment>
<comment type="subunit">
    <text evidence="1">Homodimer.</text>
</comment>
<comment type="subcellular location">
    <subcellularLocation>
        <location evidence="1">Cytoplasm</location>
    </subcellularLocation>
</comment>
<comment type="similarity">
    <text evidence="1">Belongs to the purine/pyrimidine phosphoribosyltransferase family.</text>
</comment>
<proteinExistence type="inferred from homology"/>
<name>APT_CALBD</name>
<sequence length="175" mass="19495">MNLKEKFRHVLNFPKEGIDFIDITTVLQDKDAFKYAIDSLVNLVKDLDFELIVGPESRGFIFGAPVAYVLNKGLVLVRKKGKLPYKTVSVEYELEYGKDVLEMHIDAIKPGQKVVIIDDLLATGGTTLSNIKLVEKLGGEVVGIAYLVELTYLGGRENLKGYDVRSVVQFESSLI</sequence>
<gene>
    <name evidence="1" type="primary">apt</name>
    <name type="ordered locus">Athe_1952</name>
</gene>
<evidence type="ECO:0000255" key="1">
    <source>
        <dbReference type="HAMAP-Rule" id="MF_00004"/>
    </source>
</evidence>
<keyword id="KW-0963">Cytoplasm</keyword>
<keyword id="KW-0328">Glycosyltransferase</keyword>
<keyword id="KW-0660">Purine salvage</keyword>
<keyword id="KW-0808">Transferase</keyword>
<accession>B9ML31</accession>
<reference key="1">
    <citation type="submission" date="2009-01" db="EMBL/GenBank/DDBJ databases">
        <title>Complete sequence of chromosome of Caldicellulosiruptor becscii DSM 6725.</title>
        <authorList>
            <person name="Lucas S."/>
            <person name="Copeland A."/>
            <person name="Lapidus A."/>
            <person name="Glavina del Rio T."/>
            <person name="Tice H."/>
            <person name="Bruce D."/>
            <person name="Goodwin L."/>
            <person name="Pitluck S."/>
            <person name="Sims D."/>
            <person name="Meincke L."/>
            <person name="Brettin T."/>
            <person name="Detter J.C."/>
            <person name="Han C."/>
            <person name="Larimer F."/>
            <person name="Land M."/>
            <person name="Hauser L."/>
            <person name="Kyrpides N."/>
            <person name="Ovchinnikova G."/>
            <person name="Kataeva I."/>
            <person name="Adams M.W.W."/>
        </authorList>
    </citation>
    <scope>NUCLEOTIDE SEQUENCE [LARGE SCALE GENOMIC DNA]</scope>
    <source>
        <strain>ATCC BAA-1888 / DSM 6725 / KCTC 15123 / Z-1320</strain>
    </source>
</reference>
<protein>
    <recommendedName>
        <fullName evidence="1">Adenine phosphoribosyltransferase</fullName>
        <shortName evidence="1">APRT</shortName>
        <ecNumber evidence="1">2.4.2.7</ecNumber>
    </recommendedName>
</protein>